<keyword id="KW-0025">Alternative splicing</keyword>
<keyword id="KW-0067">ATP-binding</keyword>
<keyword id="KW-0190">Covalent protein-DNA linkage</keyword>
<keyword id="KW-0235">DNA replication</keyword>
<keyword id="KW-0238">DNA-binding</keyword>
<keyword id="KW-0255">Endonuclease</keyword>
<keyword id="KW-0347">Helicase</keyword>
<keyword id="KW-1048">Host nucleus</keyword>
<keyword id="KW-0378">Hydrolase</keyword>
<keyword id="KW-0479">Metal-binding</keyword>
<keyword id="KW-0511">Multifunctional enzyme</keyword>
<keyword id="KW-0540">Nuclease</keyword>
<keyword id="KW-0547">Nucleotide-binding</keyword>
<keyword id="KW-0548">Nucleotidyltransferase</keyword>
<keyword id="KW-1185">Reference proteome</keyword>
<keyword id="KW-0678">Repressor</keyword>
<keyword id="KW-0808">Transferase</keyword>
<evidence type="ECO:0000250" key="1"/>
<evidence type="ECO:0000255" key="2"/>
<evidence type="ECO:0000255" key="3">
    <source>
        <dbReference type="PROSITE-ProRule" id="PRU01364"/>
    </source>
</evidence>
<evidence type="ECO:0000305" key="4"/>
<reference key="1">
    <citation type="journal article" date="1992" name="J. Gen. Virol.">
        <title>The nucleotide sequence of an infectious insect-transmissible clone of the geminivirus Panicum streak virus.</title>
        <authorList>
            <person name="Briddon R.W."/>
            <person name="Lunness P."/>
            <person name="Chamberlain L.C."/>
            <person name="Brundish H."/>
            <person name="Pinner M.S."/>
            <person name="Markham P.G."/>
        </authorList>
    </citation>
    <scope>NUCLEOTIDE SEQUENCE [GENOMIC DNA]</scope>
</reference>
<organismHost>
    <name type="scientific">Megathyrsus maximus</name>
    <dbReference type="NCBI Taxonomy" id="59788"/>
</organismHost>
<organism>
    <name type="scientific">Panicum streak virus (isolate Kenya)</name>
    <name type="common">PanSV</name>
    <dbReference type="NCBI Taxonomy" id="268780"/>
    <lineage>
        <taxon>Viruses</taxon>
        <taxon>Monodnaviria</taxon>
        <taxon>Shotokuvirae</taxon>
        <taxon>Cressdnaviricota</taxon>
        <taxon>Repensiviricetes</taxon>
        <taxon>Geplafuvirales</taxon>
        <taxon>Geminiviridae</taxon>
        <taxon>Mastrevirus</taxon>
        <taxon>Panicum streak virus</taxon>
    </lineage>
</organism>
<accession>P0C647</accession>
<gene>
    <name type="ORF">C1/C2</name>
</gene>
<protein>
    <recommendedName>
        <fullName>Replication-associated protein</fullName>
        <shortName>Rep</shortName>
        <ecNumber>2.7.7.-</ecNumber>
        <ecNumber>3.1.21.-</ecNumber>
    </recommendedName>
</protein>
<name>REP_PASVK</name>
<sequence>MSTVGSSSEGRHSVRCFRHRNANTFLTYSKCPLEPEFIGEHLFRLTREYEPAYILVVRETHTDGTWHCHALLQCIKPCTTRDERYFDIDRYHGNIQSAKSTDKVREYILKDPKDKWEKGTYIPRKKSFVPPGKEPAEKKPTKDEVMREIMTHATSREEYLSLVQSSLPYDWATKLNYFEYSASRLFPDIAEPYTNPHPTTEYDLHCNETIEDWLKPNIYQQNAPGERKRSLYICGPTRTGKTSWARSLGRHNYWQNNIDWSSYDEEAQYNVVDDIPFKFCPCRKRLVGCQKDYIVNPKYGKRRKVASKSIPTIILANEDEDWLKDMTPAHVEYFEANCDQYILLPGEKFYKTGEAGGSI</sequence>
<feature type="chain" id="PRO_0000316942" description="Replication-associated protein">
    <location>
        <begin position="1"/>
        <end position="359"/>
    </location>
</feature>
<feature type="domain" description="CRESS-DNA virus Rep endonuclease" evidence="3">
    <location>
        <begin position="18"/>
        <end position="121"/>
    </location>
</feature>
<feature type="region of interest" description="Oligomerization" evidence="1">
    <location>
        <begin position="181"/>
        <end position="193"/>
    </location>
</feature>
<feature type="region of interest" description="Transactivation" evidence="1">
    <location>
        <begin position="258"/>
        <end position="276"/>
    </location>
</feature>
<feature type="short sequence motif" description="RCR-1" evidence="3">
    <location>
        <begin position="25"/>
        <end position="28"/>
    </location>
</feature>
<feature type="short sequence motif" description="RCR-2" evidence="3">
    <location>
        <begin position="67"/>
        <end position="69"/>
    </location>
</feature>
<feature type="short sequence motif" description="RCR-3" evidence="3">
    <location>
        <begin position="107"/>
        <end position="110"/>
    </location>
</feature>
<feature type="short sequence motif" description="Nuclear localization signal" evidence="2">
    <location>
        <begin position="298"/>
        <end position="309"/>
    </location>
</feature>
<feature type="active site" description="For DNA cleavage activity" evidence="3">
    <location>
        <position position="107"/>
    </location>
</feature>
<feature type="binding site" evidence="3">
    <location>
        <position position="59"/>
    </location>
    <ligand>
        <name>a divalent metal cation</name>
        <dbReference type="ChEBI" id="CHEBI:60240"/>
    </ligand>
</feature>
<feature type="binding site" evidence="3">
    <location>
        <position position="67"/>
    </location>
    <ligand>
        <name>a divalent metal cation</name>
        <dbReference type="ChEBI" id="CHEBI:60240"/>
    </ligand>
</feature>
<feature type="binding site" evidence="3">
    <location>
        <position position="69"/>
    </location>
    <ligand>
        <name>a divalent metal cation</name>
        <dbReference type="ChEBI" id="CHEBI:60240"/>
    </ligand>
</feature>
<feature type="binding site" evidence="3">
    <location>
        <position position="111"/>
    </location>
    <ligand>
        <name>a divalent metal cation</name>
        <dbReference type="ChEBI" id="CHEBI:60240"/>
    </ligand>
</feature>
<feature type="binding site" evidence="2">
    <location>
        <begin position="235"/>
        <end position="242"/>
    </location>
    <ligand>
        <name>ATP</name>
        <dbReference type="ChEBI" id="CHEBI:30616"/>
    </ligand>
</feature>
<proteinExistence type="inferred from homology"/>
<dbReference type="EC" id="2.7.7.-"/>
<dbReference type="EC" id="3.1.21.-"/>
<dbReference type="EMBL" id="X60168">
    <property type="status" value="NOT_ANNOTATED_CDS"/>
    <property type="molecule type" value="Genomic_DNA"/>
</dbReference>
<dbReference type="SMR" id="P0C647"/>
<dbReference type="Proteomes" id="UP000007896">
    <property type="component" value="Genome"/>
</dbReference>
<dbReference type="GO" id="GO:0042025">
    <property type="term" value="C:host cell nucleus"/>
    <property type="evidence" value="ECO:0007669"/>
    <property type="project" value="UniProtKB-SubCell"/>
</dbReference>
<dbReference type="GO" id="GO:0005524">
    <property type="term" value="F:ATP binding"/>
    <property type="evidence" value="ECO:0007669"/>
    <property type="project" value="UniProtKB-KW"/>
</dbReference>
<dbReference type="GO" id="GO:0003677">
    <property type="term" value="F:DNA binding"/>
    <property type="evidence" value="ECO:0007669"/>
    <property type="project" value="UniProtKB-KW"/>
</dbReference>
<dbReference type="GO" id="GO:0016888">
    <property type="term" value="F:endodeoxyribonuclease activity, producing 5'-phosphomonoesters"/>
    <property type="evidence" value="ECO:0007669"/>
    <property type="project" value="InterPro"/>
</dbReference>
<dbReference type="GO" id="GO:0004386">
    <property type="term" value="F:helicase activity"/>
    <property type="evidence" value="ECO:0007669"/>
    <property type="project" value="UniProtKB-KW"/>
</dbReference>
<dbReference type="GO" id="GO:0046872">
    <property type="term" value="F:metal ion binding"/>
    <property type="evidence" value="ECO:0007669"/>
    <property type="project" value="UniProtKB-KW"/>
</dbReference>
<dbReference type="GO" id="GO:0016779">
    <property type="term" value="F:nucleotidyltransferase activity"/>
    <property type="evidence" value="ECO:0007669"/>
    <property type="project" value="UniProtKB-KW"/>
</dbReference>
<dbReference type="GO" id="GO:0005198">
    <property type="term" value="F:structural molecule activity"/>
    <property type="evidence" value="ECO:0007669"/>
    <property type="project" value="InterPro"/>
</dbReference>
<dbReference type="GO" id="GO:0006260">
    <property type="term" value="P:DNA replication"/>
    <property type="evidence" value="ECO:0007669"/>
    <property type="project" value="UniProtKB-KW"/>
</dbReference>
<dbReference type="Gene3D" id="3.40.1310.20">
    <property type="match status" value="1"/>
</dbReference>
<dbReference type="InterPro" id="IPR049912">
    <property type="entry name" value="CRESS_DNA_REP"/>
</dbReference>
<dbReference type="InterPro" id="IPR001146">
    <property type="entry name" value="Gemini_AL1_MSV"/>
</dbReference>
<dbReference type="InterPro" id="IPR001191">
    <property type="entry name" value="Gemini_AL1_REP"/>
</dbReference>
<dbReference type="InterPro" id="IPR022692">
    <property type="entry name" value="Gemini_AL1_REP_central"/>
</dbReference>
<dbReference type="InterPro" id="IPR027417">
    <property type="entry name" value="P-loop_NTPase"/>
</dbReference>
<dbReference type="Pfam" id="PF00799">
    <property type="entry name" value="Gemini_AL1"/>
    <property type="match status" value="1"/>
</dbReference>
<dbReference type="Pfam" id="PF08283">
    <property type="entry name" value="Gemini_AL1_M"/>
    <property type="match status" value="1"/>
</dbReference>
<dbReference type="PRINTS" id="PR00227">
    <property type="entry name" value="GEMCOATAL1"/>
</dbReference>
<dbReference type="PRINTS" id="PR00229">
    <property type="entry name" value="GEMCOATMSVL1"/>
</dbReference>
<dbReference type="SUPFAM" id="SSF55464">
    <property type="entry name" value="Origin of replication-binding domain, RBD-like"/>
    <property type="match status" value="1"/>
</dbReference>
<dbReference type="SUPFAM" id="SSF52540">
    <property type="entry name" value="P-loop containing nucleoside triphosphate hydrolases"/>
    <property type="match status" value="1"/>
</dbReference>
<dbReference type="PROSITE" id="PS52020">
    <property type="entry name" value="CRESS_DNA_REP"/>
    <property type="match status" value="1"/>
</dbReference>
<comment type="function">
    <text evidence="1">Essential for the replication of viral ssDNA. The closed circular ssDNA genome is first converted to a superhelical dsDNA. Rep binds a specific region at the genome origin of replication. It introduces an endonucleolytic nick within the conserved sequence 5'-TAATATTAC-3' in the intergenic region of the genome present in all geminiviruses, thereby initiating the rolling circle replication (RCR). Following cleavage, binds covalently to the 5'-phosphate of DNA as a tyrosyl ester. The cleavage gives rise to a free 3'-OH that serves as a primer for the cellular DNA polymerase. The polymerase synthesizes the (+) strand DNA by rolling circle mechanism. After one round of replication, a Rep-catalyzed nucleotidyl transfer reaction releases a circular single-stranded virus genome, thereby terminating the replication. Displays origin-specific DNA cleavage, nucleotidyl transferase, ATPase and helicase activities. Acts as an inhibitor of C-sense gene transcription (By similarity).</text>
</comment>
<comment type="cofactor">
    <cofactor evidence="3">
        <name>Mg(2+)</name>
        <dbReference type="ChEBI" id="CHEBI:18420"/>
    </cofactor>
    <cofactor evidence="3">
        <name>Mn(2+)</name>
        <dbReference type="ChEBI" id="CHEBI:29035"/>
    </cofactor>
    <text evidence="3">Divalent metal cations, possibly Mg(2+) or Mn(2+).</text>
</comment>
<comment type="subunit">
    <text>Homooligomer. Rep binds to repeated DNA motifs (iterons). Forms the O-complex, which is a Rep-DNA complex involved in the initiation of RCR. Part of the C- and V-complexes which are RepA-Rep-DNA complexes involved in the c-sense and v-sense transcription.</text>
</comment>
<comment type="subcellular location">
    <subcellularLocation>
        <location evidence="1">Host nucleus</location>
    </subcellularLocation>
</comment>
<comment type="alternative products">
    <event type="alternative splicing"/>
    <isoform>
        <id>P0C647-1</id>
        <name>Rep</name>
        <sequence type="displayed"/>
    </isoform>
    <isoform>
        <id>Q00338-1</id>
        <name>RepA</name>
        <sequence type="external"/>
    </isoform>
</comment>
<comment type="domain">
    <text>There are 3 rolling circle replication (RCR) motifs. RCR-2 is probably involved in metal coordination. RCR-3 is required for phosphodiester bond cleavage for initiation of RCR.</text>
</comment>
<comment type="similarity">
    <text evidence="4">Belongs to the geminiviridae Rep protein family.</text>
</comment>